<sequence length="71" mass="7455">MIIAIVAVVIFLLNFLTPYGYMPMMGYGGGMMGYSDERYYPPGCCQGPAESSSNGGSMITKPSTGACQGGR</sequence>
<reference key="1">
    <citation type="journal article" date="1997" name="Nature">
        <title>The complete genome sequence of the hyperthermophilic, sulphate-reducing archaeon Archaeoglobus fulgidus.</title>
        <authorList>
            <person name="Klenk H.-P."/>
            <person name="Clayton R.A."/>
            <person name="Tomb J.-F."/>
            <person name="White O."/>
            <person name="Nelson K.E."/>
            <person name="Ketchum K.A."/>
            <person name="Dodson R.J."/>
            <person name="Gwinn M.L."/>
            <person name="Hickey E.K."/>
            <person name="Peterson J.D."/>
            <person name="Richardson D.L."/>
            <person name="Kerlavage A.R."/>
            <person name="Graham D.E."/>
            <person name="Kyrpides N.C."/>
            <person name="Fleischmann R.D."/>
            <person name="Quackenbush J."/>
            <person name="Lee N.H."/>
            <person name="Sutton G.G."/>
            <person name="Gill S.R."/>
            <person name="Kirkness E.F."/>
            <person name="Dougherty B.A."/>
            <person name="McKenney K."/>
            <person name="Adams M.D."/>
            <person name="Loftus B.J."/>
            <person name="Peterson S.N."/>
            <person name="Reich C.I."/>
            <person name="McNeil L.K."/>
            <person name="Badger J.H."/>
            <person name="Glodek A."/>
            <person name="Zhou L."/>
            <person name="Overbeek R."/>
            <person name="Gocayne J.D."/>
            <person name="Weidman J.F."/>
            <person name="McDonald L.A."/>
            <person name="Utterback T.R."/>
            <person name="Cotton M.D."/>
            <person name="Spriggs T."/>
            <person name="Artiach P."/>
            <person name="Kaine B.P."/>
            <person name="Sykes S.M."/>
            <person name="Sadow P.W."/>
            <person name="D'Andrea K.P."/>
            <person name="Bowman C."/>
            <person name="Fujii C."/>
            <person name="Garland S.A."/>
            <person name="Mason T.M."/>
            <person name="Olsen G.J."/>
            <person name="Fraser C.M."/>
            <person name="Smith H.O."/>
            <person name="Woese C.R."/>
            <person name="Venter J.C."/>
        </authorList>
    </citation>
    <scope>NUCLEOTIDE SEQUENCE [LARGE SCALE GENOMIC DNA]</scope>
    <source>
        <strain>ATCC 49558 / DSM 4304 / JCM 9628 / NBRC 100126 / VC-16</strain>
    </source>
</reference>
<comment type="subcellular location">
    <subcellularLocation>
        <location evidence="3">Membrane</location>
        <topology evidence="3">Single-pass membrane protein</topology>
    </subcellularLocation>
</comment>
<name>Y146_ARCFU</name>
<feature type="chain" id="PRO_0000127837" description="Uncharacterized protein AF_0146">
    <location>
        <begin position="1"/>
        <end position="71"/>
    </location>
</feature>
<feature type="transmembrane region" description="Helical" evidence="1">
    <location>
        <begin position="2"/>
        <end position="24"/>
    </location>
</feature>
<feature type="region of interest" description="Disordered" evidence="2">
    <location>
        <begin position="48"/>
        <end position="71"/>
    </location>
</feature>
<feature type="compositionally biased region" description="Polar residues" evidence="2">
    <location>
        <begin position="49"/>
        <end position="71"/>
    </location>
</feature>
<gene>
    <name type="ordered locus">AF_0146</name>
</gene>
<evidence type="ECO:0000255" key="1"/>
<evidence type="ECO:0000256" key="2">
    <source>
        <dbReference type="SAM" id="MobiDB-lite"/>
    </source>
</evidence>
<evidence type="ECO:0000305" key="3"/>
<dbReference type="EMBL" id="AE000782">
    <property type="protein sequence ID" value="AAB91092.1"/>
    <property type="molecule type" value="Genomic_DNA"/>
</dbReference>
<dbReference type="PIR" id="B69268">
    <property type="entry name" value="B69268"/>
</dbReference>
<dbReference type="STRING" id="224325.AF_0146"/>
<dbReference type="PaxDb" id="224325-AF_0146"/>
<dbReference type="EnsemblBacteria" id="AAB91092">
    <property type="protein sequence ID" value="AAB91092"/>
    <property type="gene ID" value="AF_0146"/>
</dbReference>
<dbReference type="KEGG" id="afu:AF_0146"/>
<dbReference type="HOGENOM" id="CLU_2730107_0_0_2"/>
<dbReference type="Proteomes" id="UP000002199">
    <property type="component" value="Chromosome"/>
</dbReference>
<dbReference type="GO" id="GO:0016020">
    <property type="term" value="C:membrane"/>
    <property type="evidence" value="ECO:0007669"/>
    <property type="project" value="UniProtKB-SubCell"/>
</dbReference>
<protein>
    <recommendedName>
        <fullName>Uncharacterized protein AF_0146</fullName>
    </recommendedName>
</protein>
<keyword id="KW-0472">Membrane</keyword>
<keyword id="KW-1185">Reference proteome</keyword>
<keyword id="KW-0812">Transmembrane</keyword>
<keyword id="KW-1133">Transmembrane helix</keyword>
<proteinExistence type="predicted"/>
<accession>O30091</accession>
<organism>
    <name type="scientific">Archaeoglobus fulgidus (strain ATCC 49558 / DSM 4304 / JCM 9628 / NBRC 100126 / VC-16)</name>
    <dbReference type="NCBI Taxonomy" id="224325"/>
    <lineage>
        <taxon>Archaea</taxon>
        <taxon>Methanobacteriati</taxon>
        <taxon>Methanobacteriota</taxon>
        <taxon>Archaeoglobi</taxon>
        <taxon>Archaeoglobales</taxon>
        <taxon>Archaeoglobaceae</taxon>
        <taxon>Archaeoglobus</taxon>
    </lineage>
</organism>